<feature type="chain" id="PRO_0000321152" description="Aspartate carbamoyltransferase catalytic subunit">
    <location>
        <begin position="1"/>
        <end position="318"/>
    </location>
</feature>
<feature type="binding site" evidence="1">
    <location>
        <position position="67"/>
    </location>
    <ligand>
        <name>carbamoyl phosphate</name>
        <dbReference type="ChEBI" id="CHEBI:58228"/>
    </ligand>
</feature>
<feature type="binding site" evidence="1">
    <location>
        <position position="68"/>
    </location>
    <ligand>
        <name>carbamoyl phosphate</name>
        <dbReference type="ChEBI" id="CHEBI:58228"/>
    </ligand>
</feature>
<feature type="binding site" evidence="1">
    <location>
        <position position="95"/>
    </location>
    <ligand>
        <name>L-aspartate</name>
        <dbReference type="ChEBI" id="CHEBI:29991"/>
    </ligand>
</feature>
<feature type="binding site" evidence="1">
    <location>
        <position position="117"/>
    </location>
    <ligand>
        <name>carbamoyl phosphate</name>
        <dbReference type="ChEBI" id="CHEBI:58228"/>
    </ligand>
</feature>
<feature type="binding site" evidence="1">
    <location>
        <position position="145"/>
    </location>
    <ligand>
        <name>carbamoyl phosphate</name>
        <dbReference type="ChEBI" id="CHEBI:58228"/>
    </ligand>
</feature>
<feature type="binding site" evidence="1">
    <location>
        <position position="148"/>
    </location>
    <ligand>
        <name>carbamoyl phosphate</name>
        <dbReference type="ChEBI" id="CHEBI:58228"/>
    </ligand>
</feature>
<feature type="binding site" evidence="1">
    <location>
        <position position="178"/>
    </location>
    <ligand>
        <name>L-aspartate</name>
        <dbReference type="ChEBI" id="CHEBI:29991"/>
    </ligand>
</feature>
<feature type="binding site" evidence="1">
    <location>
        <position position="236"/>
    </location>
    <ligand>
        <name>L-aspartate</name>
        <dbReference type="ChEBI" id="CHEBI:29991"/>
    </ligand>
</feature>
<feature type="binding site" evidence="1">
    <location>
        <position position="277"/>
    </location>
    <ligand>
        <name>carbamoyl phosphate</name>
        <dbReference type="ChEBI" id="CHEBI:58228"/>
    </ligand>
</feature>
<feature type="binding site" evidence="1">
    <location>
        <position position="278"/>
    </location>
    <ligand>
        <name>carbamoyl phosphate</name>
        <dbReference type="ChEBI" id="CHEBI:58228"/>
    </ligand>
</feature>
<protein>
    <recommendedName>
        <fullName evidence="1">Aspartate carbamoyltransferase catalytic subunit</fullName>
        <ecNumber evidence="1">2.1.3.2</ecNumber>
    </recommendedName>
    <alternativeName>
        <fullName evidence="1">Aspartate transcarbamylase</fullName>
        <shortName evidence="1">ATCase</shortName>
    </alternativeName>
</protein>
<gene>
    <name evidence="1" type="primary">pyrB</name>
    <name type="ordered locus">RoseRS_2863</name>
</gene>
<accession>A5UX78</accession>
<dbReference type="EC" id="2.1.3.2" evidence="1"/>
<dbReference type="EMBL" id="CP000686">
    <property type="protein sequence ID" value="ABQ91231.1"/>
    <property type="molecule type" value="Genomic_DNA"/>
</dbReference>
<dbReference type="RefSeq" id="WP_011957575.1">
    <property type="nucleotide sequence ID" value="NC_009523.1"/>
</dbReference>
<dbReference type="SMR" id="A5UX78"/>
<dbReference type="STRING" id="357808.RoseRS_2863"/>
<dbReference type="KEGG" id="rrs:RoseRS_2863"/>
<dbReference type="eggNOG" id="COG0540">
    <property type="taxonomic scope" value="Bacteria"/>
</dbReference>
<dbReference type="HOGENOM" id="CLU_043846_2_0_0"/>
<dbReference type="OrthoDB" id="9774690at2"/>
<dbReference type="UniPathway" id="UPA00070">
    <property type="reaction ID" value="UER00116"/>
</dbReference>
<dbReference type="Proteomes" id="UP000006554">
    <property type="component" value="Chromosome"/>
</dbReference>
<dbReference type="GO" id="GO:0005829">
    <property type="term" value="C:cytosol"/>
    <property type="evidence" value="ECO:0007669"/>
    <property type="project" value="TreeGrafter"/>
</dbReference>
<dbReference type="GO" id="GO:0016597">
    <property type="term" value="F:amino acid binding"/>
    <property type="evidence" value="ECO:0007669"/>
    <property type="project" value="InterPro"/>
</dbReference>
<dbReference type="GO" id="GO:0004070">
    <property type="term" value="F:aspartate carbamoyltransferase activity"/>
    <property type="evidence" value="ECO:0007669"/>
    <property type="project" value="UniProtKB-UniRule"/>
</dbReference>
<dbReference type="GO" id="GO:0006207">
    <property type="term" value="P:'de novo' pyrimidine nucleobase biosynthetic process"/>
    <property type="evidence" value="ECO:0007669"/>
    <property type="project" value="InterPro"/>
</dbReference>
<dbReference type="GO" id="GO:0044205">
    <property type="term" value="P:'de novo' UMP biosynthetic process"/>
    <property type="evidence" value="ECO:0007669"/>
    <property type="project" value="UniProtKB-UniRule"/>
</dbReference>
<dbReference type="GO" id="GO:0006520">
    <property type="term" value="P:amino acid metabolic process"/>
    <property type="evidence" value="ECO:0007669"/>
    <property type="project" value="InterPro"/>
</dbReference>
<dbReference type="FunFam" id="3.40.50.1370:FF:000007">
    <property type="entry name" value="Aspartate carbamoyltransferase"/>
    <property type="match status" value="1"/>
</dbReference>
<dbReference type="Gene3D" id="3.40.50.1370">
    <property type="entry name" value="Aspartate/ornithine carbamoyltransferase"/>
    <property type="match status" value="2"/>
</dbReference>
<dbReference type="HAMAP" id="MF_00001">
    <property type="entry name" value="Asp_carb_tr"/>
    <property type="match status" value="1"/>
</dbReference>
<dbReference type="InterPro" id="IPR006132">
    <property type="entry name" value="Asp/Orn_carbamoyltranf_P-bd"/>
</dbReference>
<dbReference type="InterPro" id="IPR006130">
    <property type="entry name" value="Asp/Orn_carbamoylTrfase"/>
</dbReference>
<dbReference type="InterPro" id="IPR036901">
    <property type="entry name" value="Asp/Orn_carbamoylTrfase_sf"/>
</dbReference>
<dbReference type="InterPro" id="IPR002082">
    <property type="entry name" value="Asp_carbamoyltransf"/>
</dbReference>
<dbReference type="InterPro" id="IPR006131">
    <property type="entry name" value="Asp_carbamoyltransf_Asp/Orn-bd"/>
</dbReference>
<dbReference type="NCBIfam" id="TIGR00670">
    <property type="entry name" value="asp_carb_tr"/>
    <property type="match status" value="1"/>
</dbReference>
<dbReference type="NCBIfam" id="NF002032">
    <property type="entry name" value="PRK00856.1"/>
    <property type="match status" value="1"/>
</dbReference>
<dbReference type="PANTHER" id="PTHR45753:SF6">
    <property type="entry name" value="ASPARTATE CARBAMOYLTRANSFERASE"/>
    <property type="match status" value="1"/>
</dbReference>
<dbReference type="PANTHER" id="PTHR45753">
    <property type="entry name" value="ORNITHINE CARBAMOYLTRANSFERASE, MITOCHONDRIAL"/>
    <property type="match status" value="1"/>
</dbReference>
<dbReference type="Pfam" id="PF00185">
    <property type="entry name" value="OTCace"/>
    <property type="match status" value="1"/>
</dbReference>
<dbReference type="Pfam" id="PF02729">
    <property type="entry name" value="OTCace_N"/>
    <property type="match status" value="1"/>
</dbReference>
<dbReference type="PRINTS" id="PR00100">
    <property type="entry name" value="AOTCASE"/>
</dbReference>
<dbReference type="PRINTS" id="PR00101">
    <property type="entry name" value="ATCASE"/>
</dbReference>
<dbReference type="SUPFAM" id="SSF53671">
    <property type="entry name" value="Aspartate/ornithine carbamoyltransferase"/>
    <property type="match status" value="1"/>
</dbReference>
<dbReference type="PROSITE" id="PS00097">
    <property type="entry name" value="CARBAMOYLTRANSFERASE"/>
    <property type="match status" value="1"/>
</dbReference>
<comment type="function">
    <text evidence="1">Catalyzes the condensation of carbamoyl phosphate and aspartate to form carbamoyl aspartate and inorganic phosphate, the committed step in the de novo pyrimidine nucleotide biosynthesis pathway.</text>
</comment>
<comment type="catalytic activity">
    <reaction evidence="1">
        <text>carbamoyl phosphate + L-aspartate = N-carbamoyl-L-aspartate + phosphate + H(+)</text>
        <dbReference type="Rhea" id="RHEA:20013"/>
        <dbReference type="ChEBI" id="CHEBI:15378"/>
        <dbReference type="ChEBI" id="CHEBI:29991"/>
        <dbReference type="ChEBI" id="CHEBI:32814"/>
        <dbReference type="ChEBI" id="CHEBI:43474"/>
        <dbReference type="ChEBI" id="CHEBI:58228"/>
        <dbReference type="EC" id="2.1.3.2"/>
    </reaction>
</comment>
<comment type="pathway">
    <text evidence="1">Pyrimidine metabolism; UMP biosynthesis via de novo pathway; (S)-dihydroorotate from bicarbonate: step 2/3.</text>
</comment>
<comment type="subunit">
    <text evidence="1">Heterododecamer (2C3:3R2) of six catalytic PyrB chains organized as two trimers (C3), and six regulatory PyrI chains organized as three dimers (R2).</text>
</comment>
<comment type="similarity">
    <text evidence="1">Belongs to the aspartate/ornithine carbamoyltransferase superfamily. ATCase family.</text>
</comment>
<evidence type="ECO:0000255" key="1">
    <source>
        <dbReference type="HAMAP-Rule" id="MF_00001"/>
    </source>
</evidence>
<name>PYRB_ROSS1</name>
<keyword id="KW-0665">Pyrimidine biosynthesis</keyword>
<keyword id="KW-0808">Transferase</keyword>
<organism>
    <name type="scientific">Roseiflexus sp. (strain RS-1)</name>
    <dbReference type="NCBI Taxonomy" id="357808"/>
    <lineage>
        <taxon>Bacteria</taxon>
        <taxon>Bacillati</taxon>
        <taxon>Chloroflexota</taxon>
        <taxon>Chloroflexia</taxon>
        <taxon>Chloroflexales</taxon>
        <taxon>Roseiflexineae</taxon>
        <taxon>Roseiflexaceae</taxon>
        <taxon>Roseiflexus</taxon>
    </lineage>
</organism>
<proteinExistence type="inferred from homology"/>
<sequence>MSVPAEAGKRRDRRRHVLDLDDFSTQEIEEILETAVSMKEVLGRAIKQVPTLRGKTIVNMFFEESTRTRISFELAGKALSANVVNFTARGSSVEKGESLIDTVRTLQALGADMLVMRHSESGAPYLAAQYFHGSVINAGDGRHAHPTQALLDLFTVRQRLGRIEGLKVVIVGDILHSRVARSNLWGFTRMGASVTLCAPQTLIGPESFWKATWPDLTITSNLDECIKDADVIMTLRLQKERMEAGLLPSLREYSRFFAITAERVARAAPHCLVMHPGPMNEGVEIMPDVATSAQSVIEEQVANGVAVRMALLYRLSGE</sequence>
<reference key="1">
    <citation type="submission" date="2007-04" db="EMBL/GenBank/DDBJ databases">
        <title>Complete sequence of Roseiflexus sp. RS-1.</title>
        <authorList>
            <consortium name="US DOE Joint Genome Institute"/>
            <person name="Copeland A."/>
            <person name="Lucas S."/>
            <person name="Lapidus A."/>
            <person name="Barry K."/>
            <person name="Detter J.C."/>
            <person name="Glavina del Rio T."/>
            <person name="Hammon N."/>
            <person name="Israni S."/>
            <person name="Dalin E."/>
            <person name="Tice H."/>
            <person name="Pitluck S."/>
            <person name="Chertkov O."/>
            <person name="Brettin T."/>
            <person name="Bruce D."/>
            <person name="Han C."/>
            <person name="Schmutz J."/>
            <person name="Larimer F."/>
            <person name="Land M."/>
            <person name="Hauser L."/>
            <person name="Kyrpides N."/>
            <person name="Mikhailova N."/>
            <person name="Bryant D.A."/>
            <person name="Richardson P."/>
        </authorList>
    </citation>
    <scope>NUCLEOTIDE SEQUENCE [LARGE SCALE GENOMIC DNA]</scope>
    <source>
        <strain>RS-1</strain>
    </source>
</reference>